<name>RS2_ESCF3</name>
<protein>
    <recommendedName>
        <fullName evidence="1">Small ribosomal subunit protein uS2</fullName>
    </recommendedName>
    <alternativeName>
        <fullName evidence="2">30S ribosomal protein S2</fullName>
    </alternativeName>
</protein>
<gene>
    <name evidence="1" type="primary">rpsB</name>
    <name type="ordered locus">EFER_0191</name>
</gene>
<comment type="similarity">
    <text evidence="1">Belongs to the universal ribosomal protein uS2 family.</text>
</comment>
<dbReference type="EMBL" id="CU928158">
    <property type="protein sequence ID" value="CAQ87772.1"/>
    <property type="molecule type" value="Genomic_DNA"/>
</dbReference>
<dbReference type="RefSeq" id="WP_000246882.1">
    <property type="nucleotide sequence ID" value="NC_011740.1"/>
</dbReference>
<dbReference type="SMR" id="B7LWA8"/>
<dbReference type="GeneID" id="89519558"/>
<dbReference type="KEGG" id="efe:EFER_0191"/>
<dbReference type="HOGENOM" id="CLU_040318_1_2_6"/>
<dbReference type="OrthoDB" id="9808036at2"/>
<dbReference type="Proteomes" id="UP000000745">
    <property type="component" value="Chromosome"/>
</dbReference>
<dbReference type="GO" id="GO:0022627">
    <property type="term" value="C:cytosolic small ribosomal subunit"/>
    <property type="evidence" value="ECO:0007669"/>
    <property type="project" value="TreeGrafter"/>
</dbReference>
<dbReference type="GO" id="GO:0003735">
    <property type="term" value="F:structural constituent of ribosome"/>
    <property type="evidence" value="ECO:0007669"/>
    <property type="project" value="InterPro"/>
</dbReference>
<dbReference type="GO" id="GO:0006412">
    <property type="term" value="P:translation"/>
    <property type="evidence" value="ECO:0007669"/>
    <property type="project" value="UniProtKB-UniRule"/>
</dbReference>
<dbReference type="CDD" id="cd01425">
    <property type="entry name" value="RPS2"/>
    <property type="match status" value="1"/>
</dbReference>
<dbReference type="FunFam" id="1.10.287.610:FF:000001">
    <property type="entry name" value="30S ribosomal protein S2"/>
    <property type="match status" value="1"/>
</dbReference>
<dbReference type="Gene3D" id="3.40.50.10490">
    <property type="entry name" value="Glucose-6-phosphate isomerase like protein, domain 1"/>
    <property type="match status" value="1"/>
</dbReference>
<dbReference type="Gene3D" id="1.10.287.610">
    <property type="entry name" value="Helix hairpin bin"/>
    <property type="match status" value="1"/>
</dbReference>
<dbReference type="HAMAP" id="MF_00291_B">
    <property type="entry name" value="Ribosomal_uS2_B"/>
    <property type="match status" value="1"/>
</dbReference>
<dbReference type="InterPro" id="IPR001865">
    <property type="entry name" value="Ribosomal_uS2"/>
</dbReference>
<dbReference type="InterPro" id="IPR005706">
    <property type="entry name" value="Ribosomal_uS2_bac/mit/plastid"/>
</dbReference>
<dbReference type="InterPro" id="IPR018130">
    <property type="entry name" value="Ribosomal_uS2_CS"/>
</dbReference>
<dbReference type="InterPro" id="IPR023591">
    <property type="entry name" value="Ribosomal_uS2_flav_dom_sf"/>
</dbReference>
<dbReference type="NCBIfam" id="TIGR01011">
    <property type="entry name" value="rpsB_bact"/>
    <property type="match status" value="1"/>
</dbReference>
<dbReference type="PANTHER" id="PTHR12534">
    <property type="entry name" value="30S RIBOSOMAL PROTEIN S2 PROKARYOTIC AND ORGANELLAR"/>
    <property type="match status" value="1"/>
</dbReference>
<dbReference type="PANTHER" id="PTHR12534:SF0">
    <property type="entry name" value="SMALL RIBOSOMAL SUBUNIT PROTEIN US2M"/>
    <property type="match status" value="1"/>
</dbReference>
<dbReference type="Pfam" id="PF00318">
    <property type="entry name" value="Ribosomal_S2"/>
    <property type="match status" value="1"/>
</dbReference>
<dbReference type="PRINTS" id="PR00395">
    <property type="entry name" value="RIBOSOMALS2"/>
</dbReference>
<dbReference type="SUPFAM" id="SSF52313">
    <property type="entry name" value="Ribosomal protein S2"/>
    <property type="match status" value="1"/>
</dbReference>
<dbReference type="PROSITE" id="PS00962">
    <property type="entry name" value="RIBOSOMAL_S2_1"/>
    <property type="match status" value="1"/>
</dbReference>
<dbReference type="PROSITE" id="PS00963">
    <property type="entry name" value="RIBOSOMAL_S2_2"/>
    <property type="match status" value="1"/>
</dbReference>
<evidence type="ECO:0000255" key="1">
    <source>
        <dbReference type="HAMAP-Rule" id="MF_00291"/>
    </source>
</evidence>
<evidence type="ECO:0000305" key="2"/>
<keyword id="KW-0687">Ribonucleoprotein</keyword>
<keyword id="KW-0689">Ribosomal protein</keyword>
<sequence>MATVSMRDMLKAGVHFGHQTRYWNPKMKPFIFGARNKVHIINLEKTVPMFNEALAELNKIASRKGKILFVGTKRAASEAVKDAALSCDQFFVNHRWLGGMLTNWKTVRQSIKRLKDLETQSQDGTFDKLTKKEALMRTRELEKLENSLGGIKDMGGLPDALFVIDADHEHIAIKEANNLGIPVFAIVDTNSDPDGVDFVIPGNDDAIRAVTLYLGAVAATVREGRSQDLASQAEESFVEAE</sequence>
<organism>
    <name type="scientific">Escherichia fergusonii (strain ATCC 35469 / DSM 13698 / CCUG 18766 / IAM 14443 / JCM 21226 / LMG 7866 / NBRC 102419 / NCTC 12128 / CDC 0568-73)</name>
    <dbReference type="NCBI Taxonomy" id="585054"/>
    <lineage>
        <taxon>Bacteria</taxon>
        <taxon>Pseudomonadati</taxon>
        <taxon>Pseudomonadota</taxon>
        <taxon>Gammaproteobacteria</taxon>
        <taxon>Enterobacterales</taxon>
        <taxon>Enterobacteriaceae</taxon>
        <taxon>Escherichia</taxon>
    </lineage>
</organism>
<proteinExistence type="inferred from homology"/>
<accession>B7LWA8</accession>
<feature type="chain" id="PRO_1000119429" description="Small ribosomal subunit protein uS2">
    <location>
        <begin position="1"/>
        <end position="241"/>
    </location>
</feature>
<reference key="1">
    <citation type="journal article" date="2009" name="PLoS Genet.">
        <title>Organised genome dynamics in the Escherichia coli species results in highly diverse adaptive paths.</title>
        <authorList>
            <person name="Touchon M."/>
            <person name="Hoede C."/>
            <person name="Tenaillon O."/>
            <person name="Barbe V."/>
            <person name="Baeriswyl S."/>
            <person name="Bidet P."/>
            <person name="Bingen E."/>
            <person name="Bonacorsi S."/>
            <person name="Bouchier C."/>
            <person name="Bouvet O."/>
            <person name="Calteau A."/>
            <person name="Chiapello H."/>
            <person name="Clermont O."/>
            <person name="Cruveiller S."/>
            <person name="Danchin A."/>
            <person name="Diard M."/>
            <person name="Dossat C."/>
            <person name="Karoui M.E."/>
            <person name="Frapy E."/>
            <person name="Garry L."/>
            <person name="Ghigo J.M."/>
            <person name="Gilles A.M."/>
            <person name="Johnson J."/>
            <person name="Le Bouguenec C."/>
            <person name="Lescat M."/>
            <person name="Mangenot S."/>
            <person name="Martinez-Jehanne V."/>
            <person name="Matic I."/>
            <person name="Nassif X."/>
            <person name="Oztas S."/>
            <person name="Petit M.A."/>
            <person name="Pichon C."/>
            <person name="Rouy Z."/>
            <person name="Ruf C.S."/>
            <person name="Schneider D."/>
            <person name="Tourret J."/>
            <person name="Vacherie B."/>
            <person name="Vallenet D."/>
            <person name="Medigue C."/>
            <person name="Rocha E.P.C."/>
            <person name="Denamur E."/>
        </authorList>
    </citation>
    <scope>NUCLEOTIDE SEQUENCE [LARGE SCALE GENOMIC DNA]</scope>
    <source>
        <strain>ATCC 35469 / DSM 13698 / BCRC 15582 / CCUG 18766 / IAM 14443 / JCM 21226 / LMG 7866 / NBRC 102419 / NCTC 12128 / CDC 0568-73</strain>
    </source>
</reference>